<sequence>MAFEKLGEKFSNFFAMDNEDDYQDQEDEQAQQPAPEQPVDNHYRSNKVVSMATPAGKTAKIVVYEPRVYSDAKEIGSHLLNNRAVVINFDRIGSDDATRIVDFLTGTVFAINGEIKRVGESIFLVTPANFEIDGSLASTIDSDGLNLSSQH</sequence>
<name>SEPF_LACP3</name>
<protein>
    <recommendedName>
        <fullName evidence="1">Cell division protein SepF</fullName>
    </recommendedName>
</protein>
<organism>
    <name type="scientific">Lacticaseibacillus paracasei (strain ATCC 334 / BCRC 17002 / CCUG 31169 / CIP 107868 / KCTC 3260 / NRRL B-441)</name>
    <name type="common">Lactobacillus paracasei</name>
    <dbReference type="NCBI Taxonomy" id="321967"/>
    <lineage>
        <taxon>Bacteria</taxon>
        <taxon>Bacillati</taxon>
        <taxon>Bacillota</taxon>
        <taxon>Bacilli</taxon>
        <taxon>Lactobacillales</taxon>
        <taxon>Lactobacillaceae</taxon>
        <taxon>Lacticaseibacillus</taxon>
    </lineage>
</organism>
<proteinExistence type="inferred from homology"/>
<reference key="1">
    <citation type="journal article" date="2006" name="Proc. Natl. Acad. Sci. U.S.A.">
        <title>Comparative genomics of the lactic acid bacteria.</title>
        <authorList>
            <person name="Makarova K.S."/>
            <person name="Slesarev A."/>
            <person name="Wolf Y.I."/>
            <person name="Sorokin A."/>
            <person name="Mirkin B."/>
            <person name="Koonin E.V."/>
            <person name="Pavlov A."/>
            <person name="Pavlova N."/>
            <person name="Karamychev V."/>
            <person name="Polouchine N."/>
            <person name="Shakhova V."/>
            <person name="Grigoriev I."/>
            <person name="Lou Y."/>
            <person name="Rohksar D."/>
            <person name="Lucas S."/>
            <person name="Huang K."/>
            <person name="Goodstein D.M."/>
            <person name="Hawkins T."/>
            <person name="Plengvidhya V."/>
            <person name="Welker D."/>
            <person name="Hughes J."/>
            <person name="Goh Y."/>
            <person name="Benson A."/>
            <person name="Baldwin K."/>
            <person name="Lee J.-H."/>
            <person name="Diaz-Muniz I."/>
            <person name="Dosti B."/>
            <person name="Smeianov V."/>
            <person name="Wechter W."/>
            <person name="Barabote R."/>
            <person name="Lorca G."/>
            <person name="Altermann E."/>
            <person name="Barrangou R."/>
            <person name="Ganesan B."/>
            <person name="Xie Y."/>
            <person name="Rawsthorne H."/>
            <person name="Tamir D."/>
            <person name="Parker C."/>
            <person name="Breidt F."/>
            <person name="Broadbent J.R."/>
            <person name="Hutkins R."/>
            <person name="O'Sullivan D."/>
            <person name="Steele J."/>
            <person name="Unlu G."/>
            <person name="Saier M.H. Jr."/>
            <person name="Klaenhammer T."/>
            <person name="Richardson P."/>
            <person name="Kozyavkin S."/>
            <person name="Weimer B.C."/>
            <person name="Mills D.A."/>
        </authorList>
    </citation>
    <scope>NUCLEOTIDE SEQUENCE [LARGE SCALE GENOMIC DNA]</scope>
    <source>
        <strain>ATCC 334 / BCRC 17002 / CCUG 31169 / CIP 107868 / KCTC 3260 / NRRL B-441</strain>
    </source>
</reference>
<gene>
    <name evidence="1" type="primary">sepF</name>
    <name type="ordered locus">LSEI_1276</name>
</gene>
<comment type="function">
    <text evidence="1">Cell division protein that is part of the divisome complex and is recruited early to the Z-ring. Probably stimulates Z-ring formation, perhaps through the cross-linking of FtsZ protofilaments. Its function overlaps with FtsA.</text>
</comment>
<comment type="subunit">
    <text evidence="1">Homodimer. Interacts with FtsZ.</text>
</comment>
<comment type="subcellular location">
    <subcellularLocation>
        <location evidence="1">Cytoplasm</location>
    </subcellularLocation>
    <text evidence="1">Localizes to the division site, in a FtsZ-dependent manner.</text>
</comment>
<comment type="similarity">
    <text evidence="1">Belongs to the SepF family.</text>
</comment>
<evidence type="ECO:0000255" key="1">
    <source>
        <dbReference type="HAMAP-Rule" id="MF_01197"/>
    </source>
</evidence>
<evidence type="ECO:0000256" key="2">
    <source>
        <dbReference type="SAM" id="MobiDB-lite"/>
    </source>
</evidence>
<dbReference type="EMBL" id="CP000423">
    <property type="protein sequence ID" value="ABJ70059.1"/>
    <property type="molecule type" value="Genomic_DNA"/>
</dbReference>
<dbReference type="RefSeq" id="WP_003565171.1">
    <property type="nucleotide sequence ID" value="NC_008526.1"/>
</dbReference>
<dbReference type="RefSeq" id="YP_806501.1">
    <property type="nucleotide sequence ID" value="NC_008526.1"/>
</dbReference>
<dbReference type="SMR" id="Q039R3"/>
<dbReference type="STRING" id="321967.LSEI_1276"/>
<dbReference type="PaxDb" id="321967-LSEI_1276"/>
<dbReference type="KEGG" id="lca:LSEI_1276"/>
<dbReference type="PATRIC" id="fig|321967.11.peg.1253"/>
<dbReference type="HOGENOM" id="CLU_078499_4_1_9"/>
<dbReference type="Proteomes" id="UP000001651">
    <property type="component" value="Chromosome"/>
</dbReference>
<dbReference type="GO" id="GO:0005737">
    <property type="term" value="C:cytoplasm"/>
    <property type="evidence" value="ECO:0007669"/>
    <property type="project" value="UniProtKB-SubCell"/>
</dbReference>
<dbReference type="GO" id="GO:0000917">
    <property type="term" value="P:division septum assembly"/>
    <property type="evidence" value="ECO:0007669"/>
    <property type="project" value="UniProtKB-KW"/>
</dbReference>
<dbReference type="GO" id="GO:0043093">
    <property type="term" value="P:FtsZ-dependent cytokinesis"/>
    <property type="evidence" value="ECO:0007669"/>
    <property type="project" value="UniProtKB-UniRule"/>
</dbReference>
<dbReference type="Gene3D" id="3.30.110.150">
    <property type="entry name" value="SepF-like protein"/>
    <property type="match status" value="1"/>
</dbReference>
<dbReference type="HAMAP" id="MF_01197">
    <property type="entry name" value="SepF"/>
    <property type="match status" value="1"/>
</dbReference>
<dbReference type="InterPro" id="IPR023052">
    <property type="entry name" value="Cell_div_SepF"/>
</dbReference>
<dbReference type="InterPro" id="IPR007561">
    <property type="entry name" value="Cell_div_SepF/SepF-rel"/>
</dbReference>
<dbReference type="InterPro" id="IPR038594">
    <property type="entry name" value="SepF-like_sf"/>
</dbReference>
<dbReference type="PANTHER" id="PTHR35798">
    <property type="entry name" value="CELL DIVISION PROTEIN SEPF"/>
    <property type="match status" value="1"/>
</dbReference>
<dbReference type="PANTHER" id="PTHR35798:SF1">
    <property type="entry name" value="CELL DIVISION PROTEIN SEPF"/>
    <property type="match status" value="1"/>
</dbReference>
<dbReference type="Pfam" id="PF04472">
    <property type="entry name" value="SepF"/>
    <property type="match status" value="1"/>
</dbReference>
<accession>Q039R3</accession>
<keyword id="KW-0131">Cell cycle</keyword>
<keyword id="KW-0132">Cell division</keyword>
<keyword id="KW-0963">Cytoplasm</keyword>
<keyword id="KW-1185">Reference proteome</keyword>
<keyword id="KW-0717">Septation</keyword>
<feature type="chain" id="PRO_0000334017" description="Cell division protein SepF">
    <location>
        <begin position="1"/>
        <end position="151"/>
    </location>
</feature>
<feature type="region of interest" description="Disordered" evidence="2">
    <location>
        <begin position="17"/>
        <end position="42"/>
    </location>
</feature>
<feature type="compositionally biased region" description="Acidic residues" evidence="2">
    <location>
        <begin position="17"/>
        <end position="29"/>
    </location>
</feature>